<proteinExistence type="inferred from homology"/>
<organism>
    <name type="scientific">Chlorobium luteolum (strain DSM 273 / BCRC 81028 / 2530)</name>
    <name type="common">Pelodictyon luteolum</name>
    <dbReference type="NCBI Taxonomy" id="319225"/>
    <lineage>
        <taxon>Bacteria</taxon>
        <taxon>Pseudomonadati</taxon>
        <taxon>Chlorobiota</taxon>
        <taxon>Chlorobiia</taxon>
        <taxon>Chlorobiales</taxon>
        <taxon>Chlorobiaceae</taxon>
        <taxon>Chlorobium/Pelodictyon group</taxon>
        <taxon>Pelodictyon</taxon>
    </lineage>
</organism>
<reference key="1">
    <citation type="submission" date="2005-08" db="EMBL/GenBank/DDBJ databases">
        <title>Complete sequence of Pelodictyon luteolum DSM 273.</title>
        <authorList>
            <consortium name="US DOE Joint Genome Institute"/>
            <person name="Copeland A."/>
            <person name="Lucas S."/>
            <person name="Lapidus A."/>
            <person name="Barry K."/>
            <person name="Detter J.C."/>
            <person name="Glavina T."/>
            <person name="Hammon N."/>
            <person name="Israni S."/>
            <person name="Pitluck S."/>
            <person name="Bryant D."/>
            <person name="Schmutz J."/>
            <person name="Larimer F."/>
            <person name="Land M."/>
            <person name="Kyrpides N."/>
            <person name="Ivanova N."/>
            <person name="Richardson P."/>
        </authorList>
    </citation>
    <scope>NUCLEOTIDE SEQUENCE [LARGE SCALE GENOMIC DNA]</scope>
    <source>
        <strain>DSM 273 / BCRC 81028 / 2530</strain>
    </source>
</reference>
<comment type="catalytic activity">
    <reaction evidence="1">
        <text>(S)-4-amino-5-oxopentanoate = 5-aminolevulinate</text>
        <dbReference type="Rhea" id="RHEA:14265"/>
        <dbReference type="ChEBI" id="CHEBI:57501"/>
        <dbReference type="ChEBI" id="CHEBI:356416"/>
        <dbReference type="EC" id="5.4.3.8"/>
    </reaction>
</comment>
<comment type="cofactor">
    <cofactor evidence="1">
        <name>pyridoxal 5'-phosphate</name>
        <dbReference type="ChEBI" id="CHEBI:597326"/>
    </cofactor>
</comment>
<comment type="pathway">
    <text evidence="1">Porphyrin-containing compound metabolism; protoporphyrin-IX biosynthesis; 5-aminolevulinate from L-glutamyl-tRNA(Glu): step 2/2.</text>
</comment>
<comment type="pathway">
    <text evidence="1">Porphyrin-containing compound metabolism; chlorophyll biosynthesis.</text>
</comment>
<comment type="subunit">
    <text evidence="1">Homodimer.</text>
</comment>
<comment type="subcellular location">
    <subcellularLocation>
        <location evidence="1">Cytoplasm</location>
    </subcellularLocation>
</comment>
<comment type="similarity">
    <text evidence="1">Belongs to the class-III pyridoxal-phosphate-dependent aminotransferase family. HemL subfamily.</text>
</comment>
<protein>
    <recommendedName>
        <fullName evidence="1">Glutamate-1-semialdehyde 2,1-aminomutase</fullName>
        <shortName evidence="1">GSA</shortName>
        <ecNumber evidence="1">5.4.3.8</ecNumber>
    </recommendedName>
    <alternativeName>
        <fullName evidence="1">Glutamate-1-semialdehyde aminotransferase</fullName>
        <shortName evidence="1">GSA-AT</shortName>
    </alternativeName>
</protein>
<sequence length="431" mass="46116">MPTHTRSAELFEKAKKFIPGGVNSPVRAFKSVGGNPIFMAKGQGAYMTDVDGNTYLDYVGSWGPFILGSMHPRITAALEHTLTKIGTSFGTPIEMEIEIAELLTKIVPSIEMVRMVNSGTEATMSAVRLARGCTGRDKIIKFEGCYHGHGDSFLIKAGSGALTLGAPDSPGVTKGTAEDTLNAKYNDIKSVELLVAENKGNIAAIIIEPVAGNTGVIPAKKEFLQALRDLCDREGIVLIFDEVMCGFRVALGGAQELYGITPDLTTMGKIIGGGLPVGAFGGKRSLMENVAPLGGVYQAGTLSGNPLALTAGIETLKILMEENPYPELDRKGAFLEAGFRDNMQKLGLNFVQNRVGSMACLFFTETPVESYDSAITADTEKFGKYFSSMLEQGIYLAPSQFEAMFTSTMHTDADLEKTVKANYVALQAATK</sequence>
<accession>Q3B1A1</accession>
<keyword id="KW-0149">Chlorophyll biosynthesis</keyword>
<keyword id="KW-0963">Cytoplasm</keyword>
<keyword id="KW-0413">Isomerase</keyword>
<keyword id="KW-0627">Porphyrin biosynthesis</keyword>
<keyword id="KW-0663">Pyridoxal phosphate</keyword>
<keyword id="KW-1185">Reference proteome</keyword>
<evidence type="ECO:0000255" key="1">
    <source>
        <dbReference type="HAMAP-Rule" id="MF_00375"/>
    </source>
</evidence>
<dbReference type="EC" id="5.4.3.8" evidence="1"/>
<dbReference type="EMBL" id="CP000096">
    <property type="protein sequence ID" value="ABB24880.1"/>
    <property type="molecule type" value="Genomic_DNA"/>
</dbReference>
<dbReference type="RefSeq" id="WP_011358750.1">
    <property type="nucleotide sequence ID" value="NC_007512.1"/>
</dbReference>
<dbReference type="SMR" id="Q3B1A1"/>
<dbReference type="STRING" id="319225.Plut_2038"/>
<dbReference type="KEGG" id="plt:Plut_2038"/>
<dbReference type="eggNOG" id="COG0001">
    <property type="taxonomic scope" value="Bacteria"/>
</dbReference>
<dbReference type="HOGENOM" id="CLU_016922_1_5_10"/>
<dbReference type="OrthoDB" id="9807885at2"/>
<dbReference type="UniPathway" id="UPA00251">
    <property type="reaction ID" value="UER00317"/>
</dbReference>
<dbReference type="UniPathway" id="UPA00668"/>
<dbReference type="Proteomes" id="UP000002709">
    <property type="component" value="Chromosome"/>
</dbReference>
<dbReference type="GO" id="GO:0005737">
    <property type="term" value="C:cytoplasm"/>
    <property type="evidence" value="ECO:0007669"/>
    <property type="project" value="UniProtKB-SubCell"/>
</dbReference>
<dbReference type="GO" id="GO:0042286">
    <property type="term" value="F:glutamate-1-semialdehyde 2,1-aminomutase activity"/>
    <property type="evidence" value="ECO:0007669"/>
    <property type="project" value="UniProtKB-UniRule"/>
</dbReference>
<dbReference type="GO" id="GO:0030170">
    <property type="term" value="F:pyridoxal phosphate binding"/>
    <property type="evidence" value="ECO:0007669"/>
    <property type="project" value="InterPro"/>
</dbReference>
<dbReference type="GO" id="GO:0008483">
    <property type="term" value="F:transaminase activity"/>
    <property type="evidence" value="ECO:0007669"/>
    <property type="project" value="InterPro"/>
</dbReference>
<dbReference type="GO" id="GO:0015995">
    <property type="term" value="P:chlorophyll biosynthetic process"/>
    <property type="evidence" value="ECO:0007669"/>
    <property type="project" value="UniProtKB-UniRule"/>
</dbReference>
<dbReference type="GO" id="GO:0006782">
    <property type="term" value="P:protoporphyrinogen IX biosynthetic process"/>
    <property type="evidence" value="ECO:0007669"/>
    <property type="project" value="UniProtKB-UniRule"/>
</dbReference>
<dbReference type="CDD" id="cd00610">
    <property type="entry name" value="OAT_like"/>
    <property type="match status" value="1"/>
</dbReference>
<dbReference type="FunFam" id="3.40.640.10:FF:000021">
    <property type="entry name" value="Glutamate-1-semialdehyde 2,1-aminomutase"/>
    <property type="match status" value="1"/>
</dbReference>
<dbReference type="Gene3D" id="3.90.1150.10">
    <property type="entry name" value="Aspartate Aminotransferase, domain 1"/>
    <property type="match status" value="1"/>
</dbReference>
<dbReference type="Gene3D" id="3.40.640.10">
    <property type="entry name" value="Type I PLP-dependent aspartate aminotransferase-like (Major domain)"/>
    <property type="match status" value="1"/>
</dbReference>
<dbReference type="HAMAP" id="MF_00375">
    <property type="entry name" value="HemL_aminotrans_3"/>
    <property type="match status" value="1"/>
</dbReference>
<dbReference type="InterPro" id="IPR004639">
    <property type="entry name" value="4pyrrol_synth_GluAld_NH2Trfase"/>
</dbReference>
<dbReference type="InterPro" id="IPR005814">
    <property type="entry name" value="Aminotrans_3"/>
</dbReference>
<dbReference type="InterPro" id="IPR049704">
    <property type="entry name" value="Aminotrans_3_PPA_site"/>
</dbReference>
<dbReference type="InterPro" id="IPR015424">
    <property type="entry name" value="PyrdxlP-dep_Trfase"/>
</dbReference>
<dbReference type="InterPro" id="IPR015421">
    <property type="entry name" value="PyrdxlP-dep_Trfase_major"/>
</dbReference>
<dbReference type="InterPro" id="IPR015422">
    <property type="entry name" value="PyrdxlP-dep_Trfase_small"/>
</dbReference>
<dbReference type="NCBIfam" id="TIGR00713">
    <property type="entry name" value="hemL"/>
    <property type="match status" value="1"/>
</dbReference>
<dbReference type="NCBIfam" id="NF000818">
    <property type="entry name" value="PRK00062.1"/>
    <property type="match status" value="1"/>
</dbReference>
<dbReference type="PANTHER" id="PTHR43713">
    <property type="entry name" value="GLUTAMATE-1-SEMIALDEHYDE 2,1-AMINOMUTASE"/>
    <property type="match status" value="1"/>
</dbReference>
<dbReference type="PANTHER" id="PTHR43713:SF3">
    <property type="entry name" value="GLUTAMATE-1-SEMIALDEHYDE 2,1-AMINOMUTASE 1, CHLOROPLASTIC-RELATED"/>
    <property type="match status" value="1"/>
</dbReference>
<dbReference type="Pfam" id="PF00202">
    <property type="entry name" value="Aminotran_3"/>
    <property type="match status" value="1"/>
</dbReference>
<dbReference type="SUPFAM" id="SSF53383">
    <property type="entry name" value="PLP-dependent transferases"/>
    <property type="match status" value="1"/>
</dbReference>
<dbReference type="PROSITE" id="PS00600">
    <property type="entry name" value="AA_TRANSFER_CLASS_3"/>
    <property type="match status" value="1"/>
</dbReference>
<name>GSA_CHLL3</name>
<gene>
    <name evidence="1" type="primary">hemL</name>
    <name type="ordered locus">Plut_2038</name>
</gene>
<feature type="chain" id="PRO_0000243595" description="Glutamate-1-semialdehyde 2,1-aminomutase">
    <location>
        <begin position="1"/>
        <end position="431"/>
    </location>
</feature>
<feature type="modified residue" description="N6-(pyridoxal phosphate)lysine" evidence="1">
    <location>
        <position position="269"/>
    </location>
</feature>